<dbReference type="EC" id="3.1.3.16"/>
<dbReference type="EMBL" id="CT868032">
    <property type="protein sequence ID" value="CAK64611.1"/>
    <property type="molecule type" value="Genomic_DNA"/>
</dbReference>
<dbReference type="RefSeq" id="XP_001432009.1">
    <property type="nucleotide sequence ID" value="XM_001431972.1"/>
</dbReference>
<dbReference type="SMR" id="A0C1E4"/>
<dbReference type="FunCoup" id="A0C1E4">
    <property type="interactions" value="1048"/>
</dbReference>
<dbReference type="STRING" id="5888.A0C1E4"/>
<dbReference type="EnsemblProtists" id="CAK64611">
    <property type="protein sequence ID" value="CAK64611"/>
    <property type="gene ID" value="GSPATT00034087001"/>
</dbReference>
<dbReference type="GeneID" id="5017793"/>
<dbReference type="KEGG" id="ptm:GSPATT00034087001"/>
<dbReference type="eggNOG" id="KOG0372">
    <property type="taxonomic scope" value="Eukaryota"/>
</dbReference>
<dbReference type="HOGENOM" id="CLU_004962_8_1_1"/>
<dbReference type="InParanoid" id="A0C1E4"/>
<dbReference type="OMA" id="KWWFNKS"/>
<dbReference type="OrthoDB" id="1930084at2759"/>
<dbReference type="Proteomes" id="UP000000600">
    <property type="component" value="Partially assembled WGS sequence"/>
</dbReference>
<dbReference type="GO" id="GO:0005737">
    <property type="term" value="C:cytoplasm"/>
    <property type="evidence" value="ECO:0000318"/>
    <property type="project" value="GO_Central"/>
</dbReference>
<dbReference type="GO" id="GO:0005634">
    <property type="term" value="C:nucleus"/>
    <property type="evidence" value="ECO:0000318"/>
    <property type="project" value="GO_Central"/>
</dbReference>
<dbReference type="GO" id="GO:0046872">
    <property type="term" value="F:metal ion binding"/>
    <property type="evidence" value="ECO:0007669"/>
    <property type="project" value="UniProtKB-KW"/>
</dbReference>
<dbReference type="GO" id="GO:0004722">
    <property type="term" value="F:protein serine/threonine phosphatase activity"/>
    <property type="evidence" value="ECO:0000318"/>
    <property type="project" value="GO_Central"/>
</dbReference>
<dbReference type="GO" id="GO:0000724">
    <property type="term" value="P:double-strand break repair via homologous recombination"/>
    <property type="evidence" value="ECO:0000318"/>
    <property type="project" value="GO_Central"/>
</dbReference>
<dbReference type="CDD" id="cd07415">
    <property type="entry name" value="MPP_PP2A_PP4_PP6"/>
    <property type="match status" value="1"/>
</dbReference>
<dbReference type="FunFam" id="3.60.21.10:FF:000005">
    <property type="entry name" value="Serine/threonine-protein phosphatase"/>
    <property type="match status" value="1"/>
</dbReference>
<dbReference type="Gene3D" id="3.60.21.10">
    <property type="match status" value="1"/>
</dbReference>
<dbReference type="InterPro" id="IPR004843">
    <property type="entry name" value="Calcineurin-like_PHP_ApaH"/>
</dbReference>
<dbReference type="InterPro" id="IPR029052">
    <property type="entry name" value="Metallo-depent_PP-like"/>
</dbReference>
<dbReference type="InterPro" id="IPR047129">
    <property type="entry name" value="PPA2-like"/>
</dbReference>
<dbReference type="InterPro" id="IPR006186">
    <property type="entry name" value="Ser/Thr-sp_prot-phosphatase"/>
</dbReference>
<dbReference type="PANTHER" id="PTHR45619">
    <property type="entry name" value="SERINE/THREONINE-PROTEIN PHOSPHATASE PP2A-RELATED"/>
    <property type="match status" value="1"/>
</dbReference>
<dbReference type="Pfam" id="PF00149">
    <property type="entry name" value="Metallophos"/>
    <property type="match status" value="1"/>
</dbReference>
<dbReference type="PRINTS" id="PR00114">
    <property type="entry name" value="STPHPHTASE"/>
</dbReference>
<dbReference type="SMART" id="SM00156">
    <property type="entry name" value="PP2Ac"/>
    <property type="match status" value="1"/>
</dbReference>
<dbReference type="SUPFAM" id="SSF56300">
    <property type="entry name" value="Metallo-dependent phosphatases"/>
    <property type="match status" value="1"/>
</dbReference>
<dbReference type="PROSITE" id="PS00125">
    <property type="entry name" value="SER_THR_PHOSPHATASE"/>
    <property type="match status" value="1"/>
</dbReference>
<feature type="chain" id="PRO_0000308175" description="Serine/threonine-protein phosphatase PP-X homolog 3">
    <location>
        <begin position="1"/>
        <end position="305"/>
    </location>
</feature>
<feature type="active site" description="Proton donor" evidence="1">
    <location>
        <position position="114"/>
    </location>
</feature>
<feature type="binding site" evidence="1">
    <location>
        <position position="53"/>
    </location>
    <ligand>
        <name>Mn(2+)</name>
        <dbReference type="ChEBI" id="CHEBI:29035"/>
        <label>1</label>
    </ligand>
</feature>
<feature type="binding site" evidence="1">
    <location>
        <position position="55"/>
    </location>
    <ligand>
        <name>Mn(2+)</name>
        <dbReference type="ChEBI" id="CHEBI:29035"/>
        <label>1</label>
    </ligand>
</feature>
<feature type="binding site" evidence="1">
    <location>
        <position position="81"/>
    </location>
    <ligand>
        <name>Mn(2+)</name>
        <dbReference type="ChEBI" id="CHEBI:29035"/>
        <label>1</label>
    </ligand>
</feature>
<feature type="binding site" evidence="1">
    <location>
        <position position="81"/>
    </location>
    <ligand>
        <name>Mn(2+)</name>
        <dbReference type="ChEBI" id="CHEBI:29035"/>
        <label>2</label>
    </ligand>
</feature>
<feature type="binding site" evidence="1">
    <location>
        <position position="113"/>
    </location>
    <ligand>
        <name>Mn(2+)</name>
        <dbReference type="ChEBI" id="CHEBI:29035"/>
        <label>2</label>
    </ligand>
</feature>
<feature type="binding site" evidence="1">
    <location>
        <position position="163"/>
    </location>
    <ligand>
        <name>Mn(2+)</name>
        <dbReference type="ChEBI" id="CHEBI:29035"/>
        <label>2</label>
    </ligand>
</feature>
<feature type="binding site" evidence="1">
    <location>
        <position position="237"/>
    </location>
    <ligand>
        <name>Mn(2+)</name>
        <dbReference type="ChEBI" id="CHEBI:29035"/>
        <label>2</label>
    </ligand>
</feature>
<reference key="1">
    <citation type="journal article" date="2006" name="Nature">
        <title>Global trends of whole-genome duplications revealed by the ciliate Paramecium tetraurelia.</title>
        <authorList>
            <person name="Aury J.-M."/>
            <person name="Jaillon O."/>
            <person name="Duret L."/>
            <person name="Noel B."/>
            <person name="Jubin C."/>
            <person name="Porcel B.M."/>
            <person name="Segurens B."/>
            <person name="Daubin V."/>
            <person name="Anthouard V."/>
            <person name="Aiach N."/>
            <person name="Arnaiz O."/>
            <person name="Billaut A."/>
            <person name="Beisson J."/>
            <person name="Blanc I."/>
            <person name="Bouhouche K."/>
            <person name="Camara F."/>
            <person name="Duharcourt S."/>
            <person name="Guigo R."/>
            <person name="Gogendeau D."/>
            <person name="Katinka M."/>
            <person name="Keller A.-M."/>
            <person name="Kissmehl R."/>
            <person name="Klotz C."/>
            <person name="Koll F."/>
            <person name="Le Mouel A."/>
            <person name="Lepere G."/>
            <person name="Malinsky S."/>
            <person name="Nowacki M."/>
            <person name="Nowak J.K."/>
            <person name="Plattner H."/>
            <person name="Poulain J."/>
            <person name="Ruiz F."/>
            <person name="Serrano V."/>
            <person name="Zagulski M."/>
            <person name="Dessen P."/>
            <person name="Betermier M."/>
            <person name="Weissenbach J."/>
            <person name="Scarpelli C."/>
            <person name="Schaechter V."/>
            <person name="Sperling L."/>
            <person name="Meyer E."/>
            <person name="Cohen J."/>
            <person name="Wincker P."/>
        </authorList>
    </citation>
    <scope>NUCLEOTIDE SEQUENCE [LARGE SCALE GENOMIC DNA]</scope>
    <source>
        <strain>Stock d4-2</strain>
    </source>
</reference>
<protein>
    <recommendedName>
        <fullName>Serine/threonine-protein phosphatase PP-X homolog 3</fullName>
        <ecNumber>3.1.3.16</ecNumber>
    </recommendedName>
</protein>
<gene>
    <name type="primary">Ppx3</name>
    <name type="ORF">GSPATT00034087001</name>
</gene>
<name>PPX3_PARTE</name>
<evidence type="ECO:0000250" key="1"/>
<evidence type="ECO:0000305" key="2"/>
<accession>A0C1E4</accession>
<organism>
    <name type="scientific">Paramecium tetraurelia</name>
    <dbReference type="NCBI Taxonomy" id="5888"/>
    <lineage>
        <taxon>Eukaryota</taxon>
        <taxon>Sar</taxon>
        <taxon>Alveolata</taxon>
        <taxon>Ciliophora</taxon>
        <taxon>Intramacronucleata</taxon>
        <taxon>Oligohymenophorea</taxon>
        <taxon>Peniculida</taxon>
        <taxon>Parameciidae</taxon>
        <taxon>Paramecium</taxon>
    </lineage>
</organism>
<keyword id="KW-0378">Hydrolase</keyword>
<keyword id="KW-0464">Manganese</keyword>
<keyword id="KW-0479">Metal-binding</keyword>
<keyword id="KW-0904">Protein phosphatase</keyword>
<keyword id="KW-1185">Reference proteome</keyword>
<proteinExistence type="inferred from homology"/>
<sequence length="305" mass="34905">MSQSDLDRQIAQLRNCENITEGEVKALCTKAREILVEESNVQRVDAPVTICGDIHGQFFDLMELFKVGGDCPDTNYLFLGDFVDRGFNSVETFLLLLALKVRYPDRITLIRGNHESRQITQVYGFYDECLRKYGSLNVWRYCTDIFDYLSLAAVIEEKIFCVHGGLSPSIKTMDDIRAIDRKQEVPHDGAMCDLMWSDPDEIEGWNLSPRGAGYLFGGDVVDDFNRKNNIELICRAHQLVMEGYRVMFNEQLVTVWSAPNYCYRCGNVASILELDENLTKQYKIFEAAQENKGLPAKKPIPDYFL</sequence>
<comment type="catalytic activity">
    <reaction>
        <text>O-phospho-L-seryl-[protein] + H2O = L-seryl-[protein] + phosphate</text>
        <dbReference type="Rhea" id="RHEA:20629"/>
        <dbReference type="Rhea" id="RHEA-COMP:9863"/>
        <dbReference type="Rhea" id="RHEA-COMP:11604"/>
        <dbReference type="ChEBI" id="CHEBI:15377"/>
        <dbReference type="ChEBI" id="CHEBI:29999"/>
        <dbReference type="ChEBI" id="CHEBI:43474"/>
        <dbReference type="ChEBI" id="CHEBI:83421"/>
        <dbReference type="EC" id="3.1.3.16"/>
    </reaction>
</comment>
<comment type="catalytic activity">
    <reaction>
        <text>O-phospho-L-threonyl-[protein] + H2O = L-threonyl-[protein] + phosphate</text>
        <dbReference type="Rhea" id="RHEA:47004"/>
        <dbReference type="Rhea" id="RHEA-COMP:11060"/>
        <dbReference type="Rhea" id="RHEA-COMP:11605"/>
        <dbReference type="ChEBI" id="CHEBI:15377"/>
        <dbReference type="ChEBI" id="CHEBI:30013"/>
        <dbReference type="ChEBI" id="CHEBI:43474"/>
        <dbReference type="ChEBI" id="CHEBI:61977"/>
        <dbReference type="EC" id="3.1.3.16"/>
    </reaction>
</comment>
<comment type="cofactor">
    <cofactor evidence="1">
        <name>Mn(2+)</name>
        <dbReference type="ChEBI" id="CHEBI:29035"/>
    </cofactor>
    <text evidence="1">Binds 2 manganese ions per subunit.</text>
</comment>
<comment type="similarity">
    <text evidence="2">Belongs to the PPP phosphatase family. PP-4 (PP-X) subfamily.</text>
</comment>